<accession>Q9ZW30</accession>
<proteinExistence type="evidence at transcript level"/>
<organism>
    <name type="scientific">Arabidopsis thaliana</name>
    <name type="common">Mouse-ear cress</name>
    <dbReference type="NCBI Taxonomy" id="3702"/>
    <lineage>
        <taxon>Eukaryota</taxon>
        <taxon>Viridiplantae</taxon>
        <taxon>Streptophyta</taxon>
        <taxon>Embryophyta</taxon>
        <taxon>Tracheophyta</taxon>
        <taxon>Spermatophyta</taxon>
        <taxon>Magnoliopsida</taxon>
        <taxon>eudicotyledons</taxon>
        <taxon>Gunneridae</taxon>
        <taxon>Pentapetalae</taxon>
        <taxon>rosids</taxon>
        <taxon>malvids</taxon>
        <taxon>Brassicales</taxon>
        <taxon>Brassicaceae</taxon>
        <taxon>Camelineae</taxon>
        <taxon>Arabidopsis</taxon>
    </lineage>
</organism>
<sequence>MAEKEESVKLLGFWASPFSRRVEMALKLKGVPYEYLEEDLPNKTPLLLELNPLHKKVPVLVHNDKILLESHLILEYIDQTWKNSPILPQDPYEKAMARFWAKFIDDQILTLGFRSLVKAEKGREVAIEETRELLMFLEKEVTGKDFFGGKTIGFLDMIAGSMIPFCLARLWKGIGIDMIPEEKFPELNRWIKNLEEVEAVRGCIPPREKQIERMTKIAETIKSA</sequence>
<feature type="chain" id="PRO_0000413548" description="Glutathione S-transferase U1">
    <location>
        <begin position="1"/>
        <end position="224"/>
    </location>
</feature>
<feature type="domain" description="GST N-terminal">
    <location>
        <begin position="6"/>
        <end position="85"/>
    </location>
</feature>
<feature type="domain" description="GST C-terminal">
    <location>
        <begin position="90"/>
        <end position="217"/>
    </location>
</feature>
<feature type="binding site" evidence="1">
    <location>
        <begin position="16"/>
        <end position="17"/>
    </location>
    <ligand>
        <name>glutathione</name>
        <dbReference type="ChEBI" id="CHEBI:57925"/>
    </ligand>
</feature>
<feature type="binding site" evidence="1">
    <location>
        <begin position="42"/>
        <end position="43"/>
    </location>
    <ligand>
        <name>glutathione</name>
        <dbReference type="ChEBI" id="CHEBI:57925"/>
    </ligand>
</feature>
<feature type="binding site" evidence="1">
    <location>
        <begin position="56"/>
        <end position="57"/>
    </location>
    <ligand>
        <name>glutathione</name>
        <dbReference type="ChEBI" id="CHEBI:57925"/>
    </ligand>
</feature>
<feature type="binding site" evidence="1">
    <location>
        <begin position="69"/>
        <end position="70"/>
    </location>
    <ligand>
        <name>glutathione</name>
        <dbReference type="ChEBI" id="CHEBI:57925"/>
    </ligand>
</feature>
<feature type="modified residue" description="Phosphothreonine" evidence="2">
    <location>
        <position position="151"/>
    </location>
</feature>
<protein>
    <recommendedName>
        <fullName>Glutathione S-transferase U1</fullName>
        <shortName>AtGSTU1</shortName>
        <ecNumber>2.5.1.18</ecNumber>
    </recommendedName>
    <alternativeName>
        <fullName>GST class-tau member 1</fullName>
    </alternativeName>
    <alternativeName>
        <fullName>Glutathione S-transferase 19</fullName>
    </alternativeName>
</protein>
<reference key="1">
    <citation type="journal article" date="2002" name="Plant Mol. Biol.">
        <title>Probing the diversity of the Arabidopsis glutathione S-transferase gene family.</title>
        <authorList>
            <person name="Wagner U."/>
            <person name="Edwards R."/>
            <person name="Dixon D.P."/>
            <person name="Mauch F."/>
        </authorList>
    </citation>
    <scope>NUCLEOTIDE SEQUENCE [MRNA]</scope>
    <scope>GENE FAMILY</scope>
    <scope>NOMENCLATURE</scope>
    <source>
        <strain>cv. Columbia</strain>
    </source>
</reference>
<reference key="2">
    <citation type="journal article" date="1999" name="Nature">
        <title>Sequence and analysis of chromosome 2 of the plant Arabidopsis thaliana.</title>
        <authorList>
            <person name="Lin X."/>
            <person name="Kaul S."/>
            <person name="Rounsley S.D."/>
            <person name="Shea T.P."/>
            <person name="Benito M.-I."/>
            <person name="Town C.D."/>
            <person name="Fujii C.Y."/>
            <person name="Mason T.M."/>
            <person name="Bowman C.L."/>
            <person name="Barnstead M.E."/>
            <person name="Feldblyum T.V."/>
            <person name="Buell C.R."/>
            <person name="Ketchum K.A."/>
            <person name="Lee J.J."/>
            <person name="Ronning C.M."/>
            <person name="Koo H.L."/>
            <person name="Moffat K.S."/>
            <person name="Cronin L.A."/>
            <person name="Shen M."/>
            <person name="Pai G."/>
            <person name="Van Aken S."/>
            <person name="Umayam L."/>
            <person name="Tallon L.J."/>
            <person name="Gill J.E."/>
            <person name="Adams M.D."/>
            <person name="Carrera A.J."/>
            <person name="Creasy T.H."/>
            <person name="Goodman H.M."/>
            <person name="Somerville C.R."/>
            <person name="Copenhaver G.P."/>
            <person name="Preuss D."/>
            <person name="Nierman W.C."/>
            <person name="White O."/>
            <person name="Eisen J.A."/>
            <person name="Salzberg S.L."/>
            <person name="Fraser C.M."/>
            <person name="Venter J.C."/>
        </authorList>
    </citation>
    <scope>NUCLEOTIDE SEQUENCE [LARGE SCALE GENOMIC DNA]</scope>
    <source>
        <strain>cv. Columbia</strain>
    </source>
</reference>
<reference key="3">
    <citation type="journal article" date="2017" name="Plant J.">
        <title>Araport11: a complete reannotation of the Arabidopsis thaliana reference genome.</title>
        <authorList>
            <person name="Cheng C.Y."/>
            <person name="Krishnakumar V."/>
            <person name="Chan A.P."/>
            <person name="Thibaud-Nissen F."/>
            <person name="Schobel S."/>
            <person name="Town C.D."/>
        </authorList>
    </citation>
    <scope>GENOME REANNOTATION</scope>
    <source>
        <strain>cv. Columbia</strain>
    </source>
</reference>
<reference key="4">
    <citation type="journal article" date="2003" name="Science">
        <title>Empirical analysis of transcriptional activity in the Arabidopsis genome.</title>
        <authorList>
            <person name="Yamada K."/>
            <person name="Lim J."/>
            <person name="Dale J.M."/>
            <person name="Chen H."/>
            <person name="Shinn P."/>
            <person name="Palm C.J."/>
            <person name="Southwick A.M."/>
            <person name="Wu H.C."/>
            <person name="Kim C.J."/>
            <person name="Nguyen M."/>
            <person name="Pham P.K."/>
            <person name="Cheuk R.F."/>
            <person name="Karlin-Newmann G."/>
            <person name="Liu S.X."/>
            <person name="Lam B."/>
            <person name="Sakano H."/>
            <person name="Wu T."/>
            <person name="Yu G."/>
            <person name="Miranda M."/>
            <person name="Quach H.L."/>
            <person name="Tripp M."/>
            <person name="Chang C.H."/>
            <person name="Lee J.M."/>
            <person name="Toriumi M.J."/>
            <person name="Chan M.M."/>
            <person name="Tang C.C."/>
            <person name="Onodera C.S."/>
            <person name="Deng J.M."/>
            <person name="Akiyama K."/>
            <person name="Ansari Y."/>
            <person name="Arakawa T."/>
            <person name="Banh J."/>
            <person name="Banno F."/>
            <person name="Bowser L."/>
            <person name="Brooks S.Y."/>
            <person name="Carninci P."/>
            <person name="Chao Q."/>
            <person name="Choy N."/>
            <person name="Enju A."/>
            <person name="Goldsmith A.D."/>
            <person name="Gurjal M."/>
            <person name="Hansen N.F."/>
            <person name="Hayashizaki Y."/>
            <person name="Johnson-Hopson C."/>
            <person name="Hsuan V.W."/>
            <person name="Iida K."/>
            <person name="Karnes M."/>
            <person name="Khan S."/>
            <person name="Koesema E."/>
            <person name="Ishida J."/>
            <person name="Jiang P.X."/>
            <person name="Jones T."/>
            <person name="Kawai J."/>
            <person name="Kamiya A."/>
            <person name="Meyers C."/>
            <person name="Nakajima M."/>
            <person name="Narusaka M."/>
            <person name="Seki M."/>
            <person name="Sakurai T."/>
            <person name="Satou M."/>
            <person name="Tamse R."/>
            <person name="Vaysberg M."/>
            <person name="Wallender E.K."/>
            <person name="Wong C."/>
            <person name="Yamamura Y."/>
            <person name="Yuan S."/>
            <person name="Shinozaki K."/>
            <person name="Davis R.W."/>
            <person name="Theologis A."/>
            <person name="Ecker J.R."/>
        </authorList>
    </citation>
    <scope>NUCLEOTIDE SEQUENCE [LARGE SCALE MRNA]</scope>
    <source>
        <strain>cv. Columbia</strain>
    </source>
</reference>
<reference key="5">
    <citation type="journal article" date="2005" name="Plant Physiol.">
        <title>Gene expression and microscopic analysis of Arabidopsis exposed to chloroacetanilide herbicides and explosive compounds. A phytoremediation approach.</title>
        <authorList>
            <person name="Mezzari M.P."/>
            <person name="Walters K."/>
            <person name="Jelinkova M."/>
            <person name="Shih M.C."/>
            <person name="Just C.L."/>
            <person name="Schnoor J.L."/>
        </authorList>
    </citation>
    <scope>INDUCTION</scope>
</reference>
<gene>
    <name type="primary">GSTU1</name>
    <name type="synonym">GST19</name>
    <name type="ordered locus">At2g29490</name>
    <name type="ORF">F16P2.13</name>
</gene>
<keyword id="KW-0963">Cytoplasm</keyword>
<keyword id="KW-0216">Detoxification</keyword>
<keyword id="KW-0597">Phosphoprotein</keyword>
<keyword id="KW-1185">Reference proteome</keyword>
<keyword id="KW-0346">Stress response</keyword>
<keyword id="KW-0808">Transferase</keyword>
<name>GSTU1_ARATH</name>
<comment type="function">
    <text evidence="1">May be involved in the conjugation of reduced glutathione to a wide number of exogenous and endogenous hydrophobic electrophiles and have a detoxification role against certain herbicides.</text>
</comment>
<comment type="catalytic activity">
    <reaction>
        <text>RX + glutathione = an S-substituted glutathione + a halide anion + H(+)</text>
        <dbReference type="Rhea" id="RHEA:16437"/>
        <dbReference type="ChEBI" id="CHEBI:15378"/>
        <dbReference type="ChEBI" id="CHEBI:16042"/>
        <dbReference type="ChEBI" id="CHEBI:17792"/>
        <dbReference type="ChEBI" id="CHEBI:57925"/>
        <dbReference type="ChEBI" id="CHEBI:90779"/>
        <dbReference type="EC" id="2.5.1.18"/>
    </reaction>
</comment>
<comment type="subcellular location">
    <subcellularLocation>
        <location evidence="4">Cytoplasm</location>
        <location evidence="4">Cytosol</location>
    </subcellularLocation>
</comment>
<comment type="induction">
    <text evidence="3">By acetochlor, metolachlor and 2,4,6-trinitrotoluene (TNT).</text>
</comment>
<comment type="similarity">
    <text evidence="4">Belongs to the GST superfamily. Tau family.</text>
</comment>
<dbReference type="EC" id="2.5.1.18"/>
<dbReference type="EMBL" id="AF288183">
    <property type="protein sequence ID" value="AAG30132.1"/>
    <property type="molecule type" value="mRNA"/>
</dbReference>
<dbReference type="EMBL" id="AC004561">
    <property type="protein sequence ID" value="AAC95189.1"/>
    <property type="molecule type" value="Genomic_DNA"/>
</dbReference>
<dbReference type="EMBL" id="CP002685">
    <property type="protein sequence ID" value="AEC08260.1"/>
    <property type="molecule type" value="Genomic_DNA"/>
</dbReference>
<dbReference type="EMBL" id="AF428387">
    <property type="protein sequence ID" value="AAL16155.1"/>
    <property type="molecule type" value="mRNA"/>
</dbReference>
<dbReference type="EMBL" id="BT010162">
    <property type="protein sequence ID" value="AAQ22631.1"/>
    <property type="molecule type" value="mRNA"/>
</dbReference>
<dbReference type="PIR" id="A84697">
    <property type="entry name" value="A84697"/>
</dbReference>
<dbReference type="RefSeq" id="NP_180510.1">
    <property type="nucleotide sequence ID" value="NM_128503.3"/>
</dbReference>
<dbReference type="SMR" id="Q9ZW30"/>
<dbReference type="BioGRID" id="2848">
    <property type="interactions" value="6"/>
</dbReference>
<dbReference type="FunCoup" id="Q9ZW30">
    <property type="interactions" value="151"/>
</dbReference>
<dbReference type="IntAct" id="Q9ZW30">
    <property type="interactions" value="6"/>
</dbReference>
<dbReference type="STRING" id="3702.Q9ZW30"/>
<dbReference type="PaxDb" id="3702-AT2G29490.1"/>
<dbReference type="ProteomicsDB" id="247138"/>
<dbReference type="EnsemblPlants" id="AT2G29490.1">
    <property type="protein sequence ID" value="AT2G29490.1"/>
    <property type="gene ID" value="AT2G29490"/>
</dbReference>
<dbReference type="GeneID" id="817498"/>
<dbReference type="Gramene" id="AT2G29490.1">
    <property type="protein sequence ID" value="AT2G29490.1"/>
    <property type="gene ID" value="AT2G29490"/>
</dbReference>
<dbReference type="KEGG" id="ath:AT2G29490"/>
<dbReference type="Araport" id="AT2G29490"/>
<dbReference type="TAIR" id="AT2G29490">
    <property type="gene designation" value="GSTU1"/>
</dbReference>
<dbReference type="eggNOG" id="KOG0406">
    <property type="taxonomic scope" value="Eukaryota"/>
</dbReference>
<dbReference type="HOGENOM" id="CLU_011226_18_0_1"/>
<dbReference type="InParanoid" id="Q9ZW30"/>
<dbReference type="OMA" id="WQSNPIL"/>
<dbReference type="PhylomeDB" id="Q9ZW30"/>
<dbReference type="BioCyc" id="ARA:AT2G29490-MONOMER"/>
<dbReference type="PRO" id="PR:Q9ZW30"/>
<dbReference type="Proteomes" id="UP000006548">
    <property type="component" value="Chromosome 2"/>
</dbReference>
<dbReference type="ExpressionAtlas" id="Q9ZW30">
    <property type="expression patterns" value="baseline and differential"/>
</dbReference>
<dbReference type="GO" id="GO:0005737">
    <property type="term" value="C:cytoplasm"/>
    <property type="evidence" value="ECO:0000303"/>
    <property type="project" value="TAIR"/>
</dbReference>
<dbReference type="GO" id="GO:0005829">
    <property type="term" value="C:cytosol"/>
    <property type="evidence" value="ECO:0007669"/>
    <property type="project" value="UniProtKB-SubCell"/>
</dbReference>
<dbReference type="GO" id="GO:0004364">
    <property type="term" value="F:glutathione transferase activity"/>
    <property type="evidence" value="ECO:0007669"/>
    <property type="project" value="UniProtKB-EC"/>
</dbReference>
<dbReference type="GO" id="GO:0006749">
    <property type="term" value="P:glutathione metabolic process"/>
    <property type="evidence" value="ECO:0007669"/>
    <property type="project" value="InterPro"/>
</dbReference>
<dbReference type="GO" id="GO:0009407">
    <property type="term" value="P:toxin catabolic process"/>
    <property type="evidence" value="ECO:0000304"/>
    <property type="project" value="TAIR"/>
</dbReference>
<dbReference type="CDD" id="cd03185">
    <property type="entry name" value="GST_C_Tau"/>
    <property type="match status" value="1"/>
</dbReference>
<dbReference type="CDD" id="cd03058">
    <property type="entry name" value="GST_N_Tau"/>
    <property type="match status" value="1"/>
</dbReference>
<dbReference type="FunFam" id="1.20.1050.10:FF:000012">
    <property type="entry name" value="Tau class glutathione S-transferase"/>
    <property type="match status" value="1"/>
</dbReference>
<dbReference type="FunFam" id="3.40.30.10:FF:000014">
    <property type="entry name" value="Tau class glutathione S-transferase"/>
    <property type="match status" value="1"/>
</dbReference>
<dbReference type="Gene3D" id="1.20.1050.10">
    <property type="match status" value="1"/>
</dbReference>
<dbReference type="Gene3D" id="3.40.30.10">
    <property type="entry name" value="Glutaredoxin"/>
    <property type="match status" value="1"/>
</dbReference>
<dbReference type="InterPro" id="IPR010987">
    <property type="entry name" value="Glutathione-S-Trfase_C-like"/>
</dbReference>
<dbReference type="InterPro" id="IPR036282">
    <property type="entry name" value="Glutathione-S-Trfase_C_sf"/>
</dbReference>
<dbReference type="InterPro" id="IPR040079">
    <property type="entry name" value="Glutathione_S-Trfase"/>
</dbReference>
<dbReference type="InterPro" id="IPR004045">
    <property type="entry name" value="Glutathione_S-Trfase_N"/>
</dbReference>
<dbReference type="InterPro" id="IPR004046">
    <property type="entry name" value="GST_C"/>
</dbReference>
<dbReference type="InterPro" id="IPR045074">
    <property type="entry name" value="GST_C_Tau"/>
</dbReference>
<dbReference type="InterPro" id="IPR045073">
    <property type="entry name" value="Omega/Tau-like"/>
</dbReference>
<dbReference type="InterPro" id="IPR036249">
    <property type="entry name" value="Thioredoxin-like_sf"/>
</dbReference>
<dbReference type="PANTHER" id="PTHR11260:SF639">
    <property type="entry name" value="GLUTATHIONE S-TRANSFERASE U1"/>
    <property type="match status" value="1"/>
</dbReference>
<dbReference type="PANTHER" id="PTHR11260">
    <property type="entry name" value="GLUTATHIONE S-TRANSFERASE, GST, SUPERFAMILY, GST DOMAIN CONTAINING"/>
    <property type="match status" value="1"/>
</dbReference>
<dbReference type="Pfam" id="PF00043">
    <property type="entry name" value="GST_C"/>
    <property type="match status" value="1"/>
</dbReference>
<dbReference type="Pfam" id="PF02798">
    <property type="entry name" value="GST_N"/>
    <property type="match status" value="1"/>
</dbReference>
<dbReference type="SFLD" id="SFLDS00019">
    <property type="entry name" value="Glutathione_Transferase_(cytos"/>
    <property type="match status" value="1"/>
</dbReference>
<dbReference type="SFLD" id="SFLDG01152">
    <property type="entry name" value="Main.3:_Omega-_and_Tau-like"/>
    <property type="match status" value="1"/>
</dbReference>
<dbReference type="SUPFAM" id="SSF47616">
    <property type="entry name" value="GST C-terminal domain-like"/>
    <property type="match status" value="1"/>
</dbReference>
<dbReference type="SUPFAM" id="SSF52833">
    <property type="entry name" value="Thioredoxin-like"/>
    <property type="match status" value="1"/>
</dbReference>
<dbReference type="PROSITE" id="PS50405">
    <property type="entry name" value="GST_CTER"/>
    <property type="match status" value="1"/>
</dbReference>
<dbReference type="PROSITE" id="PS50404">
    <property type="entry name" value="GST_NTER"/>
    <property type="match status" value="1"/>
</dbReference>
<evidence type="ECO:0000250" key="1"/>
<evidence type="ECO:0000250" key="2">
    <source>
        <dbReference type="UniProtKB" id="Q9ZW27"/>
    </source>
</evidence>
<evidence type="ECO:0000269" key="3">
    <source>
    </source>
</evidence>
<evidence type="ECO:0000305" key="4"/>